<dbReference type="EC" id="7.2.1.1" evidence="1"/>
<dbReference type="EMBL" id="AE002160">
    <property type="protein sequence ID" value="AAF39392.1"/>
    <property type="molecule type" value="Genomic_DNA"/>
</dbReference>
<dbReference type="PIR" id="E81690">
    <property type="entry name" value="E81690"/>
</dbReference>
<dbReference type="RefSeq" id="WP_010230822.1">
    <property type="nucleotide sequence ID" value="NZ_CP063055.1"/>
</dbReference>
<dbReference type="SMR" id="Q9PKB3"/>
<dbReference type="GeneID" id="1245913"/>
<dbReference type="KEGG" id="cmu:TC_0553"/>
<dbReference type="eggNOG" id="COG2209">
    <property type="taxonomic scope" value="Bacteria"/>
</dbReference>
<dbReference type="HOGENOM" id="CLU_095255_0_0_0"/>
<dbReference type="OrthoDB" id="9803631at2"/>
<dbReference type="Proteomes" id="UP000000800">
    <property type="component" value="Chromosome"/>
</dbReference>
<dbReference type="GO" id="GO:0009276">
    <property type="term" value="C:Gram-negative-bacterium-type cell wall"/>
    <property type="evidence" value="ECO:0007669"/>
    <property type="project" value="InterPro"/>
</dbReference>
<dbReference type="GO" id="GO:0005886">
    <property type="term" value="C:plasma membrane"/>
    <property type="evidence" value="ECO:0007669"/>
    <property type="project" value="UniProtKB-SubCell"/>
</dbReference>
<dbReference type="GO" id="GO:0016655">
    <property type="term" value="F:oxidoreductase activity, acting on NAD(P)H, quinone or similar compound as acceptor"/>
    <property type="evidence" value="ECO:0007669"/>
    <property type="project" value="UniProtKB-UniRule"/>
</dbReference>
<dbReference type="GO" id="GO:0022904">
    <property type="term" value="P:respiratory electron transport chain"/>
    <property type="evidence" value="ECO:0007669"/>
    <property type="project" value="InterPro"/>
</dbReference>
<dbReference type="GO" id="GO:0006814">
    <property type="term" value="P:sodium ion transport"/>
    <property type="evidence" value="ECO:0007669"/>
    <property type="project" value="UniProtKB-UniRule"/>
</dbReference>
<dbReference type="HAMAP" id="MF_00429">
    <property type="entry name" value="NqrE"/>
    <property type="match status" value="1"/>
</dbReference>
<dbReference type="InterPro" id="IPR003667">
    <property type="entry name" value="NqrDE/RnfAE"/>
</dbReference>
<dbReference type="InterPro" id="IPR050133">
    <property type="entry name" value="NqrDE/RnfAE_oxidrdctase"/>
</dbReference>
<dbReference type="InterPro" id="IPR010967">
    <property type="entry name" value="NqrE"/>
</dbReference>
<dbReference type="NCBIfam" id="TIGR01940">
    <property type="entry name" value="nqrE"/>
    <property type="match status" value="1"/>
</dbReference>
<dbReference type="NCBIfam" id="NF002200">
    <property type="entry name" value="PRK01061.1"/>
    <property type="match status" value="1"/>
</dbReference>
<dbReference type="PANTHER" id="PTHR30335">
    <property type="entry name" value="INTEGRAL MEMBRANE PROTEIN OF SOXR-REDUCING COMPLEX"/>
    <property type="match status" value="1"/>
</dbReference>
<dbReference type="PANTHER" id="PTHR30335:SF1">
    <property type="entry name" value="NA(+)-TRANSLOCATING NADH-QUINONE REDUCTASE SUBUNIT E"/>
    <property type="match status" value="1"/>
</dbReference>
<dbReference type="Pfam" id="PF02508">
    <property type="entry name" value="Rnf-Nqr"/>
    <property type="match status" value="1"/>
</dbReference>
<dbReference type="PIRSF" id="PIRSF006102">
    <property type="entry name" value="NQR_DE"/>
    <property type="match status" value="1"/>
</dbReference>
<feature type="chain" id="PRO_0000214248" description="Na(+)-translocating NADH-quinone reductase subunit E">
    <location>
        <begin position="1"/>
        <end position="244"/>
    </location>
</feature>
<feature type="transmembrane region" description="Helical" evidence="1">
    <location>
        <begin position="11"/>
        <end position="31"/>
    </location>
</feature>
<feature type="transmembrane region" description="Helical" evidence="1">
    <location>
        <begin position="47"/>
        <end position="67"/>
    </location>
</feature>
<feature type="transmembrane region" description="Helical" evidence="1">
    <location>
        <begin position="90"/>
        <end position="110"/>
    </location>
</feature>
<feature type="transmembrane region" description="Helical" evidence="1">
    <location>
        <begin position="123"/>
        <end position="143"/>
    </location>
</feature>
<feature type="transmembrane region" description="Helical" evidence="1">
    <location>
        <begin position="153"/>
        <end position="173"/>
    </location>
</feature>
<feature type="transmembrane region" description="Helical" evidence="1">
    <location>
        <begin position="189"/>
        <end position="209"/>
    </location>
</feature>
<proteinExistence type="inferred from homology"/>
<gene>
    <name evidence="1" type="primary">nqrE</name>
    <name type="ordered locus">TC_0553</name>
</gene>
<evidence type="ECO:0000255" key="1">
    <source>
        <dbReference type="HAMAP-Rule" id="MF_00429"/>
    </source>
</evidence>
<sequence length="244" mass="26466">MWLGDYSLINLLGIFLQATFIQNILLSTFLGMCSYLACSSRLSTANGLGMSVALVLTITGSINWLIHHFVTGPHALSWLSPALANIDLSFLELITFIVVIAAFTQILELLLERFSRNLYLALGIFLPLIAVNCAILGGVLFGITRNYPFLPMVVFSLGSGCGWWLAIVLFATIREKLAYSDIPQHLQGMGISFITTGLIAMAFMGLTGIDISKPTAKSVVISDTSTNKSKTTSAQERLSSNHKA</sequence>
<comment type="function">
    <text evidence="1">NQR complex catalyzes the reduction of ubiquinone-1 to ubiquinol by two successive reactions, coupled with the transport of Na(+) ions from the cytoplasm to the periplasm. NqrA to NqrE are probably involved in the second step, the conversion of ubisemiquinone to ubiquinol.</text>
</comment>
<comment type="catalytic activity">
    <reaction evidence="1">
        <text>a ubiquinone + n Na(+)(in) + NADH + H(+) = a ubiquinol + n Na(+)(out) + NAD(+)</text>
        <dbReference type="Rhea" id="RHEA:47748"/>
        <dbReference type="Rhea" id="RHEA-COMP:9565"/>
        <dbReference type="Rhea" id="RHEA-COMP:9566"/>
        <dbReference type="ChEBI" id="CHEBI:15378"/>
        <dbReference type="ChEBI" id="CHEBI:16389"/>
        <dbReference type="ChEBI" id="CHEBI:17976"/>
        <dbReference type="ChEBI" id="CHEBI:29101"/>
        <dbReference type="ChEBI" id="CHEBI:57540"/>
        <dbReference type="ChEBI" id="CHEBI:57945"/>
        <dbReference type="EC" id="7.2.1.1"/>
    </reaction>
</comment>
<comment type="subunit">
    <text evidence="1">Composed of six subunits; NqrA, NqrB, NqrC, NqrD, NqrE and NqrF.</text>
</comment>
<comment type="subcellular location">
    <subcellularLocation>
        <location evidence="1">Cell inner membrane</location>
        <topology evidence="1">Multi-pass membrane protein</topology>
    </subcellularLocation>
</comment>
<comment type="similarity">
    <text evidence="1">Belongs to the NqrDE/RnfAE family.</text>
</comment>
<accession>Q9PKB3</accession>
<protein>
    <recommendedName>
        <fullName evidence="1">Na(+)-translocating NADH-quinone reductase subunit E</fullName>
        <shortName evidence="1">Na(+)-NQR subunit E</shortName>
        <shortName evidence="1">Na(+)-translocating NQR subunit E</shortName>
        <ecNumber evidence="1">7.2.1.1</ecNumber>
    </recommendedName>
    <alternativeName>
        <fullName evidence="1">NQR complex subunit E</fullName>
    </alternativeName>
    <alternativeName>
        <fullName evidence="1">NQR-1 subunit E</fullName>
    </alternativeName>
</protein>
<organism>
    <name type="scientific">Chlamydia muridarum (strain MoPn / Nigg)</name>
    <dbReference type="NCBI Taxonomy" id="243161"/>
    <lineage>
        <taxon>Bacteria</taxon>
        <taxon>Pseudomonadati</taxon>
        <taxon>Chlamydiota</taxon>
        <taxon>Chlamydiia</taxon>
        <taxon>Chlamydiales</taxon>
        <taxon>Chlamydiaceae</taxon>
        <taxon>Chlamydia/Chlamydophila group</taxon>
        <taxon>Chlamydia</taxon>
    </lineage>
</organism>
<keyword id="KW-0997">Cell inner membrane</keyword>
<keyword id="KW-1003">Cell membrane</keyword>
<keyword id="KW-0406">Ion transport</keyword>
<keyword id="KW-0472">Membrane</keyword>
<keyword id="KW-0520">NAD</keyword>
<keyword id="KW-0915">Sodium</keyword>
<keyword id="KW-0739">Sodium transport</keyword>
<keyword id="KW-1278">Translocase</keyword>
<keyword id="KW-0812">Transmembrane</keyword>
<keyword id="KW-1133">Transmembrane helix</keyword>
<keyword id="KW-0813">Transport</keyword>
<keyword id="KW-0830">Ubiquinone</keyword>
<name>NQRE_CHLMU</name>
<reference key="1">
    <citation type="journal article" date="2000" name="Nucleic Acids Res.">
        <title>Genome sequences of Chlamydia trachomatis MoPn and Chlamydia pneumoniae AR39.</title>
        <authorList>
            <person name="Read T.D."/>
            <person name="Brunham R.C."/>
            <person name="Shen C."/>
            <person name="Gill S.R."/>
            <person name="Heidelberg J.F."/>
            <person name="White O."/>
            <person name="Hickey E.K."/>
            <person name="Peterson J.D."/>
            <person name="Utterback T.R."/>
            <person name="Berry K.J."/>
            <person name="Bass S."/>
            <person name="Linher K.D."/>
            <person name="Weidman J.F."/>
            <person name="Khouri H.M."/>
            <person name="Craven B."/>
            <person name="Bowman C."/>
            <person name="Dodson R.J."/>
            <person name="Gwinn M.L."/>
            <person name="Nelson W.C."/>
            <person name="DeBoy R.T."/>
            <person name="Kolonay J.F."/>
            <person name="McClarty G."/>
            <person name="Salzberg S.L."/>
            <person name="Eisen J.A."/>
            <person name="Fraser C.M."/>
        </authorList>
    </citation>
    <scope>NUCLEOTIDE SEQUENCE [LARGE SCALE GENOMIC DNA]</scope>
    <source>
        <strain>MoPn / Nigg</strain>
    </source>
</reference>